<feature type="chain" id="PRO_0000052795" description="Hemoglobin subunit alpha">
    <location>
        <begin position="1"/>
        <end position="141"/>
    </location>
</feature>
<feature type="peptide" id="PRO_0000455956" description="Hemopressin" evidence="2">
    <location>
        <begin position="95"/>
        <end position="103"/>
    </location>
</feature>
<feature type="domain" description="Globin" evidence="4">
    <location>
        <begin position="1"/>
        <end position="141"/>
    </location>
</feature>
<feature type="binding site" evidence="4">
    <location>
        <position position="58"/>
    </location>
    <ligand>
        <name>O2</name>
        <dbReference type="ChEBI" id="CHEBI:15379"/>
    </ligand>
</feature>
<feature type="binding site" description="proximal binding residue" evidence="4">
    <location>
        <position position="87"/>
    </location>
    <ligand>
        <name>heme b</name>
        <dbReference type="ChEBI" id="CHEBI:60344"/>
    </ligand>
    <ligandPart>
        <name>Fe</name>
        <dbReference type="ChEBI" id="CHEBI:18248"/>
    </ligandPart>
</feature>
<feature type="modified residue" description="Phosphoserine" evidence="3">
    <location>
        <position position="3"/>
    </location>
</feature>
<feature type="modified residue" description="N6-succinyllysine" evidence="1">
    <location>
        <position position="7"/>
    </location>
</feature>
<feature type="modified residue" description="Phosphothreonine" evidence="3">
    <location>
        <position position="8"/>
    </location>
</feature>
<feature type="modified residue" description="N6-succinyllysine" evidence="1">
    <location>
        <position position="11"/>
    </location>
</feature>
<feature type="modified residue" description="N6-acetyllysine; alternate" evidence="3">
    <location>
        <position position="16"/>
    </location>
</feature>
<feature type="modified residue" description="N6-succinyllysine; alternate" evidence="1">
    <location>
        <position position="16"/>
    </location>
</feature>
<feature type="modified residue" description="Phosphotyrosine" evidence="3">
    <location>
        <position position="24"/>
    </location>
</feature>
<feature type="modified residue" description="N6-succinyllysine" evidence="1">
    <location>
        <position position="40"/>
    </location>
</feature>
<feature type="modified residue" description="Phosphoserine" evidence="1">
    <location>
        <position position="102"/>
    </location>
</feature>
<feature type="modified residue" description="Phosphothreonine" evidence="1">
    <location>
        <position position="108"/>
    </location>
</feature>
<feature type="modified residue" description="Phosphoserine" evidence="1">
    <location>
        <position position="124"/>
    </location>
</feature>
<feature type="modified residue" description="Phosphoserine" evidence="1">
    <location>
        <position position="131"/>
    </location>
</feature>
<feature type="modified residue" description="Phosphothreonine" evidence="1">
    <location>
        <position position="134"/>
    </location>
</feature>
<feature type="modified residue" description="Phosphothreonine" evidence="1">
    <location>
        <position position="137"/>
    </location>
</feature>
<feature type="modified residue" description="Phosphoserine" evidence="1">
    <location>
        <position position="138"/>
    </location>
</feature>
<name>HBA_TURTR</name>
<accession>P18978</accession>
<keyword id="KW-0007">Acetylation</keyword>
<keyword id="KW-0903">Direct protein sequencing</keyword>
<keyword id="KW-0349">Heme</keyword>
<keyword id="KW-0408">Iron</keyword>
<keyword id="KW-0479">Metal-binding</keyword>
<keyword id="KW-0561">Oxygen transport</keyword>
<keyword id="KW-0597">Phosphoprotein</keyword>
<keyword id="KW-1185">Reference proteome</keyword>
<keyword id="KW-0813">Transport</keyword>
<proteinExistence type="evidence at protein level"/>
<comment type="function">
    <text>Involved in oxygen transport from the lung to the various peripheral tissues.</text>
</comment>
<comment type="function">
    <molecule>Hemopressin</molecule>
    <text evidence="2">Hemopressin acts as an antagonist peptide of the cannabinoid receptor CNR1. Hemopressin-binding efficiently blocks cannabinoid receptor CNR1 and subsequent signaling.</text>
</comment>
<comment type="subunit">
    <text>Heterotetramer of two alpha chains and two beta chains.</text>
</comment>
<comment type="tissue specificity">
    <text>Red blood cells.</text>
</comment>
<comment type="similarity">
    <text evidence="4">Belongs to the globin family.</text>
</comment>
<dbReference type="PIR" id="S06522">
    <property type="entry name" value="HADD"/>
</dbReference>
<dbReference type="SMR" id="P18978"/>
<dbReference type="FunCoup" id="P18978">
    <property type="interactions" value="67"/>
</dbReference>
<dbReference type="STRING" id="9739.ENSTTRP00000011461"/>
<dbReference type="HOGENOM" id="CLU_003827_10_2_1"/>
<dbReference type="InParanoid" id="P18978"/>
<dbReference type="OMA" id="MFTSFPT"/>
<dbReference type="TreeFam" id="TF332328"/>
<dbReference type="Proteomes" id="UP000245320">
    <property type="component" value="Unplaced"/>
</dbReference>
<dbReference type="GO" id="GO:0072562">
    <property type="term" value="C:blood microparticle"/>
    <property type="evidence" value="ECO:0007669"/>
    <property type="project" value="TreeGrafter"/>
</dbReference>
<dbReference type="GO" id="GO:0031838">
    <property type="term" value="C:haptoglobin-hemoglobin complex"/>
    <property type="evidence" value="ECO:0007669"/>
    <property type="project" value="TreeGrafter"/>
</dbReference>
<dbReference type="GO" id="GO:0005833">
    <property type="term" value="C:hemoglobin complex"/>
    <property type="evidence" value="ECO:0007669"/>
    <property type="project" value="InterPro"/>
</dbReference>
<dbReference type="GO" id="GO:0031720">
    <property type="term" value="F:haptoglobin binding"/>
    <property type="evidence" value="ECO:0007669"/>
    <property type="project" value="TreeGrafter"/>
</dbReference>
<dbReference type="GO" id="GO:0020037">
    <property type="term" value="F:heme binding"/>
    <property type="evidence" value="ECO:0007669"/>
    <property type="project" value="InterPro"/>
</dbReference>
<dbReference type="GO" id="GO:0005506">
    <property type="term" value="F:iron ion binding"/>
    <property type="evidence" value="ECO:0007669"/>
    <property type="project" value="InterPro"/>
</dbReference>
<dbReference type="GO" id="GO:0043177">
    <property type="term" value="F:organic acid binding"/>
    <property type="evidence" value="ECO:0007669"/>
    <property type="project" value="TreeGrafter"/>
</dbReference>
<dbReference type="GO" id="GO:0019825">
    <property type="term" value="F:oxygen binding"/>
    <property type="evidence" value="ECO:0007669"/>
    <property type="project" value="InterPro"/>
</dbReference>
<dbReference type="GO" id="GO:0005344">
    <property type="term" value="F:oxygen carrier activity"/>
    <property type="evidence" value="ECO:0007669"/>
    <property type="project" value="UniProtKB-KW"/>
</dbReference>
<dbReference type="GO" id="GO:0004601">
    <property type="term" value="F:peroxidase activity"/>
    <property type="evidence" value="ECO:0007669"/>
    <property type="project" value="TreeGrafter"/>
</dbReference>
<dbReference type="GO" id="GO:0042744">
    <property type="term" value="P:hydrogen peroxide catabolic process"/>
    <property type="evidence" value="ECO:0007669"/>
    <property type="project" value="TreeGrafter"/>
</dbReference>
<dbReference type="CDD" id="cd08927">
    <property type="entry name" value="Hb-alpha-like"/>
    <property type="match status" value="1"/>
</dbReference>
<dbReference type="FunFam" id="1.10.490.10:FF:000002">
    <property type="entry name" value="Hemoglobin subunit alpha"/>
    <property type="match status" value="1"/>
</dbReference>
<dbReference type="Gene3D" id="1.10.490.10">
    <property type="entry name" value="Globins"/>
    <property type="match status" value="1"/>
</dbReference>
<dbReference type="InterPro" id="IPR000971">
    <property type="entry name" value="Globin"/>
</dbReference>
<dbReference type="InterPro" id="IPR009050">
    <property type="entry name" value="Globin-like_sf"/>
</dbReference>
<dbReference type="InterPro" id="IPR012292">
    <property type="entry name" value="Globin/Proto"/>
</dbReference>
<dbReference type="InterPro" id="IPR002338">
    <property type="entry name" value="Hemoglobin_a-typ"/>
</dbReference>
<dbReference type="InterPro" id="IPR050056">
    <property type="entry name" value="Hemoglobin_oxygen_transport"/>
</dbReference>
<dbReference type="InterPro" id="IPR002339">
    <property type="entry name" value="Hemoglobin_pi"/>
</dbReference>
<dbReference type="PANTHER" id="PTHR11442">
    <property type="entry name" value="HEMOGLOBIN FAMILY MEMBER"/>
    <property type="match status" value="1"/>
</dbReference>
<dbReference type="PANTHER" id="PTHR11442:SF48">
    <property type="entry name" value="HEMOGLOBIN SUBUNIT ALPHA"/>
    <property type="match status" value="1"/>
</dbReference>
<dbReference type="Pfam" id="PF00042">
    <property type="entry name" value="Globin"/>
    <property type="match status" value="1"/>
</dbReference>
<dbReference type="PRINTS" id="PR00612">
    <property type="entry name" value="ALPHAHAEM"/>
</dbReference>
<dbReference type="PRINTS" id="PR00815">
    <property type="entry name" value="PIHAEM"/>
</dbReference>
<dbReference type="SUPFAM" id="SSF46458">
    <property type="entry name" value="Globin-like"/>
    <property type="match status" value="1"/>
</dbReference>
<dbReference type="PROSITE" id="PS01033">
    <property type="entry name" value="GLOBIN"/>
    <property type="match status" value="1"/>
</dbReference>
<sequence>VLSPADKTNVKGTWSKIGNHSAEYGAEALERMFINFPSTKTYFSHFDLGHGSAQIKGHGKKVADALTKAVGHIDNLPDALSELSDLHAHKLRVDPVNFKLLSHCLLVTLALHLPADFTPSVHASLDKFLASVSTVLTSKYR</sequence>
<evidence type="ECO:0000250" key="1">
    <source>
        <dbReference type="UniProtKB" id="P01942"/>
    </source>
</evidence>
<evidence type="ECO:0000250" key="2">
    <source>
        <dbReference type="UniProtKB" id="P01946"/>
    </source>
</evidence>
<evidence type="ECO:0000250" key="3">
    <source>
        <dbReference type="UniProtKB" id="P69905"/>
    </source>
</evidence>
<evidence type="ECO:0000255" key="4">
    <source>
        <dbReference type="PROSITE-ProRule" id="PRU00238"/>
    </source>
</evidence>
<reference key="1">
    <citation type="journal article" date="1983" name="Biomed. Biochim. Acta">
        <title>The primary structure of hemoglobins from the bottlenosed dolphin (Tursiops truncatus, Cetacea).</title>
        <authorList>
            <person name="Kleinschmidt T."/>
            <person name="Braunitzer G."/>
        </authorList>
    </citation>
    <scope>PROTEIN SEQUENCE</scope>
</reference>
<gene>
    <name type="primary">HBA</name>
</gene>
<organism>
    <name type="scientific">Tursiops truncatus</name>
    <name type="common">Atlantic bottle-nosed dolphin</name>
    <name type="synonym">Delphinus truncatus</name>
    <dbReference type="NCBI Taxonomy" id="9739"/>
    <lineage>
        <taxon>Eukaryota</taxon>
        <taxon>Metazoa</taxon>
        <taxon>Chordata</taxon>
        <taxon>Craniata</taxon>
        <taxon>Vertebrata</taxon>
        <taxon>Euteleostomi</taxon>
        <taxon>Mammalia</taxon>
        <taxon>Eutheria</taxon>
        <taxon>Laurasiatheria</taxon>
        <taxon>Artiodactyla</taxon>
        <taxon>Whippomorpha</taxon>
        <taxon>Cetacea</taxon>
        <taxon>Odontoceti</taxon>
        <taxon>Delphinidae</taxon>
        <taxon>Tursiops</taxon>
    </lineage>
</organism>
<protein>
    <recommendedName>
        <fullName>Hemoglobin subunit alpha</fullName>
    </recommendedName>
    <alternativeName>
        <fullName>Alpha-globin</fullName>
    </alternativeName>
    <alternativeName>
        <fullName>Hemoglobin alpha chain</fullName>
    </alternativeName>
    <component>
        <recommendedName>
            <fullName evidence="2">Hemopressin</fullName>
        </recommendedName>
    </component>
</protein>